<feature type="chain" id="PRO_1000186452" description="Bifunctional protein GlmU">
    <location>
        <begin position="1"/>
        <end position="456"/>
    </location>
</feature>
<feature type="region of interest" description="Pyrophosphorylase" evidence="1">
    <location>
        <begin position="1"/>
        <end position="229"/>
    </location>
</feature>
<feature type="region of interest" description="Linker" evidence="1">
    <location>
        <begin position="230"/>
        <end position="250"/>
    </location>
</feature>
<feature type="region of interest" description="N-acetyltransferase" evidence="1">
    <location>
        <begin position="251"/>
        <end position="456"/>
    </location>
</feature>
<feature type="active site" description="Proton acceptor" evidence="1">
    <location>
        <position position="363"/>
    </location>
</feature>
<feature type="binding site" evidence="1">
    <location>
        <begin position="11"/>
        <end position="14"/>
    </location>
    <ligand>
        <name>UDP-N-acetyl-alpha-D-glucosamine</name>
        <dbReference type="ChEBI" id="CHEBI:57705"/>
    </ligand>
</feature>
<feature type="binding site" evidence="1">
    <location>
        <position position="25"/>
    </location>
    <ligand>
        <name>UDP-N-acetyl-alpha-D-glucosamine</name>
        <dbReference type="ChEBI" id="CHEBI:57705"/>
    </ligand>
</feature>
<feature type="binding site" evidence="1">
    <location>
        <position position="76"/>
    </location>
    <ligand>
        <name>UDP-N-acetyl-alpha-D-glucosamine</name>
        <dbReference type="ChEBI" id="CHEBI:57705"/>
    </ligand>
</feature>
<feature type="binding site" evidence="1">
    <location>
        <begin position="81"/>
        <end position="82"/>
    </location>
    <ligand>
        <name>UDP-N-acetyl-alpha-D-glucosamine</name>
        <dbReference type="ChEBI" id="CHEBI:57705"/>
    </ligand>
</feature>
<feature type="binding site" evidence="1">
    <location>
        <begin position="103"/>
        <end position="105"/>
    </location>
    <ligand>
        <name>UDP-N-acetyl-alpha-D-glucosamine</name>
        <dbReference type="ChEBI" id="CHEBI:57705"/>
    </ligand>
</feature>
<feature type="binding site" evidence="1">
    <location>
        <position position="105"/>
    </location>
    <ligand>
        <name>Mg(2+)</name>
        <dbReference type="ChEBI" id="CHEBI:18420"/>
    </ligand>
</feature>
<feature type="binding site" evidence="1">
    <location>
        <position position="140"/>
    </location>
    <ligand>
        <name>UDP-N-acetyl-alpha-D-glucosamine</name>
        <dbReference type="ChEBI" id="CHEBI:57705"/>
    </ligand>
</feature>
<feature type="binding site" evidence="1">
    <location>
        <position position="154"/>
    </location>
    <ligand>
        <name>UDP-N-acetyl-alpha-D-glucosamine</name>
        <dbReference type="ChEBI" id="CHEBI:57705"/>
    </ligand>
</feature>
<feature type="binding site" evidence="1">
    <location>
        <position position="169"/>
    </location>
    <ligand>
        <name>UDP-N-acetyl-alpha-D-glucosamine</name>
        <dbReference type="ChEBI" id="CHEBI:57705"/>
    </ligand>
</feature>
<feature type="binding site" evidence="1">
    <location>
        <position position="227"/>
    </location>
    <ligand>
        <name>Mg(2+)</name>
        <dbReference type="ChEBI" id="CHEBI:18420"/>
    </ligand>
</feature>
<feature type="binding site" evidence="1">
    <location>
        <position position="227"/>
    </location>
    <ligand>
        <name>UDP-N-acetyl-alpha-D-glucosamine</name>
        <dbReference type="ChEBI" id="CHEBI:57705"/>
    </ligand>
</feature>
<feature type="binding site" evidence="1">
    <location>
        <position position="333"/>
    </location>
    <ligand>
        <name>UDP-N-acetyl-alpha-D-glucosamine</name>
        <dbReference type="ChEBI" id="CHEBI:57705"/>
    </ligand>
</feature>
<feature type="binding site" evidence="1">
    <location>
        <position position="351"/>
    </location>
    <ligand>
        <name>UDP-N-acetyl-alpha-D-glucosamine</name>
        <dbReference type="ChEBI" id="CHEBI:57705"/>
    </ligand>
</feature>
<feature type="binding site" evidence="1">
    <location>
        <position position="366"/>
    </location>
    <ligand>
        <name>UDP-N-acetyl-alpha-D-glucosamine</name>
        <dbReference type="ChEBI" id="CHEBI:57705"/>
    </ligand>
</feature>
<feature type="binding site" evidence="1">
    <location>
        <position position="377"/>
    </location>
    <ligand>
        <name>UDP-N-acetyl-alpha-D-glucosamine</name>
        <dbReference type="ChEBI" id="CHEBI:57705"/>
    </ligand>
</feature>
<feature type="binding site" evidence="1">
    <location>
        <position position="380"/>
    </location>
    <ligand>
        <name>acetyl-CoA</name>
        <dbReference type="ChEBI" id="CHEBI:57288"/>
    </ligand>
</feature>
<feature type="binding site" evidence="1">
    <location>
        <begin position="386"/>
        <end position="387"/>
    </location>
    <ligand>
        <name>acetyl-CoA</name>
        <dbReference type="ChEBI" id="CHEBI:57288"/>
    </ligand>
</feature>
<feature type="binding site" evidence="1">
    <location>
        <position position="405"/>
    </location>
    <ligand>
        <name>acetyl-CoA</name>
        <dbReference type="ChEBI" id="CHEBI:57288"/>
    </ligand>
</feature>
<feature type="binding site" evidence="1">
    <location>
        <position position="423"/>
    </location>
    <ligand>
        <name>acetyl-CoA</name>
        <dbReference type="ChEBI" id="CHEBI:57288"/>
    </ligand>
</feature>
<feature type="binding site" evidence="1">
    <location>
        <position position="440"/>
    </location>
    <ligand>
        <name>acetyl-CoA</name>
        <dbReference type="ChEBI" id="CHEBI:57288"/>
    </ligand>
</feature>
<name>GLMU_ERWT9</name>
<protein>
    <recommendedName>
        <fullName evidence="1">Bifunctional protein GlmU</fullName>
    </recommendedName>
    <domain>
        <recommendedName>
            <fullName evidence="1">UDP-N-acetylglucosamine pyrophosphorylase</fullName>
            <ecNumber evidence="1">2.7.7.23</ecNumber>
        </recommendedName>
        <alternativeName>
            <fullName evidence="1">N-acetylglucosamine-1-phosphate uridyltransferase</fullName>
        </alternativeName>
    </domain>
    <domain>
        <recommendedName>
            <fullName evidence="1">Glucosamine-1-phosphate N-acetyltransferase</fullName>
            <ecNumber evidence="1">2.3.1.157</ecNumber>
        </recommendedName>
    </domain>
</protein>
<dbReference type="EC" id="2.7.7.23" evidence="1"/>
<dbReference type="EC" id="2.3.1.157" evidence="1"/>
<dbReference type="EMBL" id="CU468135">
    <property type="protein sequence ID" value="CAO98519.1"/>
    <property type="molecule type" value="Genomic_DNA"/>
</dbReference>
<dbReference type="RefSeq" id="WP_012443139.1">
    <property type="nucleotide sequence ID" value="NC_010694.1"/>
</dbReference>
<dbReference type="SMR" id="B2VCC9"/>
<dbReference type="STRING" id="465817.ETA_34730"/>
<dbReference type="KEGG" id="eta:ETA_34730"/>
<dbReference type="eggNOG" id="COG1207">
    <property type="taxonomic scope" value="Bacteria"/>
</dbReference>
<dbReference type="HOGENOM" id="CLU_029499_15_2_6"/>
<dbReference type="OrthoDB" id="9775031at2"/>
<dbReference type="UniPathway" id="UPA00113">
    <property type="reaction ID" value="UER00532"/>
</dbReference>
<dbReference type="UniPathway" id="UPA00113">
    <property type="reaction ID" value="UER00533"/>
</dbReference>
<dbReference type="UniPathway" id="UPA00973"/>
<dbReference type="Proteomes" id="UP000001726">
    <property type="component" value="Chromosome"/>
</dbReference>
<dbReference type="GO" id="GO:0005737">
    <property type="term" value="C:cytoplasm"/>
    <property type="evidence" value="ECO:0007669"/>
    <property type="project" value="UniProtKB-SubCell"/>
</dbReference>
<dbReference type="GO" id="GO:0016020">
    <property type="term" value="C:membrane"/>
    <property type="evidence" value="ECO:0007669"/>
    <property type="project" value="GOC"/>
</dbReference>
<dbReference type="GO" id="GO:0019134">
    <property type="term" value="F:glucosamine-1-phosphate N-acetyltransferase activity"/>
    <property type="evidence" value="ECO:0007669"/>
    <property type="project" value="UniProtKB-UniRule"/>
</dbReference>
<dbReference type="GO" id="GO:0000287">
    <property type="term" value="F:magnesium ion binding"/>
    <property type="evidence" value="ECO:0007669"/>
    <property type="project" value="UniProtKB-UniRule"/>
</dbReference>
<dbReference type="GO" id="GO:0003977">
    <property type="term" value="F:UDP-N-acetylglucosamine diphosphorylase activity"/>
    <property type="evidence" value="ECO:0007669"/>
    <property type="project" value="UniProtKB-UniRule"/>
</dbReference>
<dbReference type="GO" id="GO:0000902">
    <property type="term" value="P:cell morphogenesis"/>
    <property type="evidence" value="ECO:0007669"/>
    <property type="project" value="UniProtKB-UniRule"/>
</dbReference>
<dbReference type="GO" id="GO:0071555">
    <property type="term" value="P:cell wall organization"/>
    <property type="evidence" value="ECO:0007669"/>
    <property type="project" value="UniProtKB-KW"/>
</dbReference>
<dbReference type="GO" id="GO:0009245">
    <property type="term" value="P:lipid A biosynthetic process"/>
    <property type="evidence" value="ECO:0007669"/>
    <property type="project" value="UniProtKB-UniRule"/>
</dbReference>
<dbReference type="GO" id="GO:0009252">
    <property type="term" value="P:peptidoglycan biosynthetic process"/>
    <property type="evidence" value="ECO:0007669"/>
    <property type="project" value="UniProtKB-UniRule"/>
</dbReference>
<dbReference type="GO" id="GO:0008360">
    <property type="term" value="P:regulation of cell shape"/>
    <property type="evidence" value="ECO:0007669"/>
    <property type="project" value="UniProtKB-KW"/>
</dbReference>
<dbReference type="GO" id="GO:0006048">
    <property type="term" value="P:UDP-N-acetylglucosamine biosynthetic process"/>
    <property type="evidence" value="ECO:0007669"/>
    <property type="project" value="UniProtKB-UniPathway"/>
</dbReference>
<dbReference type="CDD" id="cd02540">
    <property type="entry name" value="GT2_GlmU_N_bac"/>
    <property type="match status" value="1"/>
</dbReference>
<dbReference type="CDD" id="cd03353">
    <property type="entry name" value="LbH_GlmU_C"/>
    <property type="match status" value="1"/>
</dbReference>
<dbReference type="FunFam" id="3.90.550.10:FF:000006">
    <property type="entry name" value="Bifunctional protein GlmU"/>
    <property type="match status" value="1"/>
</dbReference>
<dbReference type="Gene3D" id="2.160.10.10">
    <property type="entry name" value="Hexapeptide repeat proteins"/>
    <property type="match status" value="1"/>
</dbReference>
<dbReference type="Gene3D" id="3.90.550.10">
    <property type="entry name" value="Spore Coat Polysaccharide Biosynthesis Protein SpsA, Chain A"/>
    <property type="match status" value="1"/>
</dbReference>
<dbReference type="HAMAP" id="MF_01631">
    <property type="entry name" value="GlmU"/>
    <property type="match status" value="1"/>
</dbReference>
<dbReference type="InterPro" id="IPR005882">
    <property type="entry name" value="Bifunctional_GlmU"/>
</dbReference>
<dbReference type="InterPro" id="IPR050065">
    <property type="entry name" value="GlmU-like"/>
</dbReference>
<dbReference type="InterPro" id="IPR038009">
    <property type="entry name" value="GlmU_C_LbH"/>
</dbReference>
<dbReference type="InterPro" id="IPR001451">
    <property type="entry name" value="Hexapep"/>
</dbReference>
<dbReference type="InterPro" id="IPR018357">
    <property type="entry name" value="Hexapep_transf_CS"/>
</dbReference>
<dbReference type="InterPro" id="IPR025877">
    <property type="entry name" value="MobA-like_NTP_Trfase"/>
</dbReference>
<dbReference type="InterPro" id="IPR029044">
    <property type="entry name" value="Nucleotide-diphossugar_trans"/>
</dbReference>
<dbReference type="InterPro" id="IPR011004">
    <property type="entry name" value="Trimer_LpxA-like_sf"/>
</dbReference>
<dbReference type="NCBIfam" id="TIGR01173">
    <property type="entry name" value="glmU"/>
    <property type="match status" value="1"/>
</dbReference>
<dbReference type="NCBIfam" id="NF006986">
    <property type="entry name" value="PRK09451.1"/>
    <property type="match status" value="1"/>
</dbReference>
<dbReference type="PANTHER" id="PTHR43584:SF3">
    <property type="entry name" value="BIFUNCTIONAL PROTEIN GLMU"/>
    <property type="match status" value="1"/>
</dbReference>
<dbReference type="PANTHER" id="PTHR43584">
    <property type="entry name" value="NUCLEOTIDYL TRANSFERASE"/>
    <property type="match status" value="1"/>
</dbReference>
<dbReference type="Pfam" id="PF00132">
    <property type="entry name" value="Hexapep"/>
    <property type="match status" value="2"/>
</dbReference>
<dbReference type="Pfam" id="PF12804">
    <property type="entry name" value="NTP_transf_3"/>
    <property type="match status" value="1"/>
</dbReference>
<dbReference type="SUPFAM" id="SSF53448">
    <property type="entry name" value="Nucleotide-diphospho-sugar transferases"/>
    <property type="match status" value="1"/>
</dbReference>
<dbReference type="SUPFAM" id="SSF51161">
    <property type="entry name" value="Trimeric LpxA-like enzymes"/>
    <property type="match status" value="1"/>
</dbReference>
<dbReference type="PROSITE" id="PS00101">
    <property type="entry name" value="HEXAPEP_TRANSFERASES"/>
    <property type="match status" value="1"/>
</dbReference>
<keyword id="KW-0012">Acyltransferase</keyword>
<keyword id="KW-0133">Cell shape</keyword>
<keyword id="KW-0961">Cell wall biogenesis/degradation</keyword>
<keyword id="KW-0963">Cytoplasm</keyword>
<keyword id="KW-0460">Magnesium</keyword>
<keyword id="KW-0479">Metal-binding</keyword>
<keyword id="KW-0511">Multifunctional enzyme</keyword>
<keyword id="KW-0548">Nucleotidyltransferase</keyword>
<keyword id="KW-0573">Peptidoglycan synthesis</keyword>
<keyword id="KW-1185">Reference proteome</keyword>
<keyword id="KW-0677">Repeat</keyword>
<keyword id="KW-0808">Transferase</keyword>
<sequence length="456" mass="48980">MSNRPMSVVILAAGKGTRMYSDLPKVLHLLAGKPMVQHVIDAARELNAQRVNLVYGHGGELLKTALDDRSLNWVLQAEQLGTGHAMQQAAPYFADDEDILMLYGDVPLITGETLRRLQAVKPDGGIGLLTVNLANPTGYGRIIRENGRVVGIIEQKDAAPEQLAIGEINTGILLAGGADLKRWLSKLTNNNAQGEYYITDIIALAHQEGRQIEAVHPVRTTETDGVNNRLQLATLERVYQAEQAEKLLLSGVMLQDPARFDLRGTLEHGRDVVIDTNVIIEGHVKLGNRVKIGSGCVIKNSVIADDCIISPYSVIEDAQLAPDCSVGPFARLRPGSELAEGAHVGNFVEMKKARLGKGSKAGHLSYLGDAEIGANVNIGAGTITCNYDGVNKSKTIIGDDVFVGSDTQLIAPVSVAAGVTIAAGTTIMRNVPAAGLVYNRKEQQLNASWQRPQKKK</sequence>
<reference key="1">
    <citation type="journal article" date="2008" name="Environ. Microbiol.">
        <title>The genome of Erwinia tasmaniensis strain Et1/99, a non-pathogenic bacterium in the genus Erwinia.</title>
        <authorList>
            <person name="Kube M."/>
            <person name="Migdoll A.M."/>
            <person name="Mueller I."/>
            <person name="Kuhl H."/>
            <person name="Beck A."/>
            <person name="Reinhardt R."/>
            <person name="Geider K."/>
        </authorList>
    </citation>
    <scope>NUCLEOTIDE SEQUENCE [LARGE SCALE GENOMIC DNA]</scope>
    <source>
        <strain>DSM 17950 / CFBP 7177 / CIP 109463 / NCPPB 4357 / Et1/99</strain>
    </source>
</reference>
<proteinExistence type="inferred from homology"/>
<organism>
    <name type="scientific">Erwinia tasmaniensis (strain DSM 17950 / CFBP 7177 / CIP 109463 / NCPPB 4357 / Et1/99)</name>
    <dbReference type="NCBI Taxonomy" id="465817"/>
    <lineage>
        <taxon>Bacteria</taxon>
        <taxon>Pseudomonadati</taxon>
        <taxon>Pseudomonadota</taxon>
        <taxon>Gammaproteobacteria</taxon>
        <taxon>Enterobacterales</taxon>
        <taxon>Erwiniaceae</taxon>
        <taxon>Erwinia</taxon>
    </lineage>
</organism>
<gene>
    <name evidence="1" type="primary">glmU</name>
    <name type="ordered locus">ETA_34730</name>
</gene>
<accession>B2VCC9</accession>
<evidence type="ECO:0000255" key="1">
    <source>
        <dbReference type="HAMAP-Rule" id="MF_01631"/>
    </source>
</evidence>
<comment type="function">
    <text evidence="1">Catalyzes the last two sequential reactions in the de novo biosynthetic pathway for UDP-N-acetylglucosamine (UDP-GlcNAc). The C-terminal domain catalyzes the transfer of acetyl group from acetyl coenzyme A to glucosamine-1-phosphate (GlcN-1-P) to produce N-acetylglucosamine-1-phosphate (GlcNAc-1-P), which is converted into UDP-GlcNAc by the transfer of uridine 5-monophosphate (from uridine 5-triphosphate), a reaction catalyzed by the N-terminal domain.</text>
</comment>
<comment type="catalytic activity">
    <reaction evidence="1">
        <text>alpha-D-glucosamine 1-phosphate + acetyl-CoA = N-acetyl-alpha-D-glucosamine 1-phosphate + CoA + H(+)</text>
        <dbReference type="Rhea" id="RHEA:13725"/>
        <dbReference type="ChEBI" id="CHEBI:15378"/>
        <dbReference type="ChEBI" id="CHEBI:57287"/>
        <dbReference type="ChEBI" id="CHEBI:57288"/>
        <dbReference type="ChEBI" id="CHEBI:57776"/>
        <dbReference type="ChEBI" id="CHEBI:58516"/>
        <dbReference type="EC" id="2.3.1.157"/>
    </reaction>
</comment>
<comment type="catalytic activity">
    <reaction evidence="1">
        <text>N-acetyl-alpha-D-glucosamine 1-phosphate + UTP + H(+) = UDP-N-acetyl-alpha-D-glucosamine + diphosphate</text>
        <dbReference type="Rhea" id="RHEA:13509"/>
        <dbReference type="ChEBI" id="CHEBI:15378"/>
        <dbReference type="ChEBI" id="CHEBI:33019"/>
        <dbReference type="ChEBI" id="CHEBI:46398"/>
        <dbReference type="ChEBI" id="CHEBI:57705"/>
        <dbReference type="ChEBI" id="CHEBI:57776"/>
        <dbReference type="EC" id="2.7.7.23"/>
    </reaction>
</comment>
<comment type="cofactor">
    <cofactor evidence="1">
        <name>Mg(2+)</name>
        <dbReference type="ChEBI" id="CHEBI:18420"/>
    </cofactor>
    <text evidence="1">Binds 1 Mg(2+) ion per subunit.</text>
</comment>
<comment type="pathway">
    <text evidence="1">Nucleotide-sugar biosynthesis; UDP-N-acetyl-alpha-D-glucosamine biosynthesis; N-acetyl-alpha-D-glucosamine 1-phosphate from alpha-D-glucosamine 6-phosphate (route II): step 2/2.</text>
</comment>
<comment type="pathway">
    <text evidence="1">Nucleotide-sugar biosynthesis; UDP-N-acetyl-alpha-D-glucosamine biosynthesis; UDP-N-acetyl-alpha-D-glucosamine from N-acetyl-alpha-D-glucosamine 1-phosphate: step 1/1.</text>
</comment>
<comment type="pathway">
    <text evidence="1">Bacterial outer membrane biogenesis; LPS lipid A biosynthesis.</text>
</comment>
<comment type="subunit">
    <text evidence="1">Homotrimer.</text>
</comment>
<comment type="subcellular location">
    <subcellularLocation>
        <location evidence="1">Cytoplasm</location>
    </subcellularLocation>
</comment>
<comment type="similarity">
    <text evidence="1">In the N-terminal section; belongs to the N-acetylglucosamine-1-phosphate uridyltransferase family.</text>
</comment>
<comment type="similarity">
    <text evidence="1">In the C-terminal section; belongs to the transferase hexapeptide repeat family.</text>
</comment>